<dbReference type="EC" id="2.7.1.2" evidence="1"/>
<dbReference type="EMBL" id="CP000948">
    <property type="protein sequence ID" value="ACB03545.1"/>
    <property type="molecule type" value="Genomic_DNA"/>
</dbReference>
<dbReference type="RefSeq" id="WP_000170346.1">
    <property type="nucleotide sequence ID" value="NC_010473.1"/>
</dbReference>
<dbReference type="SMR" id="B1X9R0"/>
<dbReference type="GeneID" id="75202543"/>
<dbReference type="KEGG" id="ecd:ECDH10B_2553"/>
<dbReference type="HOGENOM" id="CLU_042582_1_0_6"/>
<dbReference type="GO" id="GO:0005829">
    <property type="term" value="C:cytosol"/>
    <property type="evidence" value="ECO:0007669"/>
    <property type="project" value="TreeGrafter"/>
</dbReference>
<dbReference type="GO" id="GO:0005524">
    <property type="term" value="F:ATP binding"/>
    <property type="evidence" value="ECO:0007669"/>
    <property type="project" value="UniProtKB-UniRule"/>
</dbReference>
<dbReference type="GO" id="GO:0005536">
    <property type="term" value="F:D-glucose binding"/>
    <property type="evidence" value="ECO:0007669"/>
    <property type="project" value="InterPro"/>
</dbReference>
<dbReference type="GO" id="GO:0004340">
    <property type="term" value="F:glucokinase activity"/>
    <property type="evidence" value="ECO:0007669"/>
    <property type="project" value="UniProtKB-UniRule"/>
</dbReference>
<dbReference type="GO" id="GO:0006096">
    <property type="term" value="P:glycolytic process"/>
    <property type="evidence" value="ECO:0007669"/>
    <property type="project" value="UniProtKB-UniRule"/>
</dbReference>
<dbReference type="CDD" id="cd24008">
    <property type="entry name" value="ASKHA_NBD_GLK"/>
    <property type="match status" value="1"/>
</dbReference>
<dbReference type="FunFam" id="3.30.420.40:FF:000045">
    <property type="entry name" value="Glucokinase"/>
    <property type="match status" value="1"/>
</dbReference>
<dbReference type="FunFam" id="3.40.367.20:FF:000002">
    <property type="entry name" value="Glucokinase"/>
    <property type="match status" value="1"/>
</dbReference>
<dbReference type="Gene3D" id="3.30.420.40">
    <property type="match status" value="1"/>
</dbReference>
<dbReference type="Gene3D" id="3.40.367.20">
    <property type="match status" value="1"/>
</dbReference>
<dbReference type="HAMAP" id="MF_00524">
    <property type="entry name" value="Glucokinase"/>
    <property type="match status" value="1"/>
</dbReference>
<dbReference type="InterPro" id="IPR043129">
    <property type="entry name" value="ATPase_NBD"/>
</dbReference>
<dbReference type="InterPro" id="IPR050201">
    <property type="entry name" value="Bacterial_glucokinase"/>
</dbReference>
<dbReference type="InterPro" id="IPR003836">
    <property type="entry name" value="Glucokinase"/>
</dbReference>
<dbReference type="NCBIfam" id="TIGR00749">
    <property type="entry name" value="glk"/>
    <property type="match status" value="1"/>
</dbReference>
<dbReference type="NCBIfam" id="NF001414">
    <property type="entry name" value="PRK00292.1-1"/>
    <property type="match status" value="1"/>
</dbReference>
<dbReference type="NCBIfam" id="NF001416">
    <property type="entry name" value="PRK00292.1-3"/>
    <property type="match status" value="1"/>
</dbReference>
<dbReference type="PANTHER" id="PTHR47690">
    <property type="entry name" value="GLUCOKINASE"/>
    <property type="match status" value="1"/>
</dbReference>
<dbReference type="PANTHER" id="PTHR47690:SF1">
    <property type="entry name" value="GLUCOKINASE"/>
    <property type="match status" value="1"/>
</dbReference>
<dbReference type="Pfam" id="PF02685">
    <property type="entry name" value="Glucokinase"/>
    <property type="match status" value="1"/>
</dbReference>
<dbReference type="SUPFAM" id="SSF53067">
    <property type="entry name" value="Actin-like ATPase domain"/>
    <property type="match status" value="1"/>
</dbReference>
<evidence type="ECO:0000255" key="1">
    <source>
        <dbReference type="HAMAP-Rule" id="MF_00524"/>
    </source>
</evidence>
<name>GLK_ECODH</name>
<protein>
    <recommendedName>
        <fullName evidence="1">Glucokinase</fullName>
        <ecNumber evidence="1">2.7.1.2</ecNumber>
    </recommendedName>
    <alternativeName>
        <fullName evidence="1">Glucose kinase</fullName>
    </alternativeName>
</protein>
<feature type="chain" id="PRO_1000127703" description="Glucokinase">
    <location>
        <begin position="1"/>
        <end position="321"/>
    </location>
</feature>
<feature type="binding site" evidence="1">
    <location>
        <begin position="8"/>
        <end position="13"/>
    </location>
    <ligand>
        <name>ATP</name>
        <dbReference type="ChEBI" id="CHEBI:30616"/>
    </ligand>
</feature>
<proteinExistence type="inferred from homology"/>
<gene>
    <name evidence="1" type="primary">glk</name>
    <name type="ordered locus">ECDH10B_2553</name>
</gene>
<comment type="catalytic activity">
    <reaction evidence="1">
        <text>D-glucose + ATP = D-glucose 6-phosphate + ADP + H(+)</text>
        <dbReference type="Rhea" id="RHEA:17825"/>
        <dbReference type="ChEBI" id="CHEBI:4167"/>
        <dbReference type="ChEBI" id="CHEBI:15378"/>
        <dbReference type="ChEBI" id="CHEBI:30616"/>
        <dbReference type="ChEBI" id="CHEBI:61548"/>
        <dbReference type="ChEBI" id="CHEBI:456216"/>
        <dbReference type="EC" id="2.7.1.2"/>
    </reaction>
</comment>
<comment type="subcellular location">
    <subcellularLocation>
        <location evidence="1">Cytoplasm</location>
    </subcellularLocation>
</comment>
<comment type="similarity">
    <text evidence="1">Belongs to the bacterial glucokinase family.</text>
</comment>
<keyword id="KW-0067">ATP-binding</keyword>
<keyword id="KW-0963">Cytoplasm</keyword>
<keyword id="KW-0324">Glycolysis</keyword>
<keyword id="KW-0418">Kinase</keyword>
<keyword id="KW-0547">Nucleotide-binding</keyword>
<keyword id="KW-0808">Transferase</keyword>
<organism>
    <name type="scientific">Escherichia coli (strain K12 / DH10B)</name>
    <dbReference type="NCBI Taxonomy" id="316385"/>
    <lineage>
        <taxon>Bacteria</taxon>
        <taxon>Pseudomonadati</taxon>
        <taxon>Pseudomonadota</taxon>
        <taxon>Gammaproteobacteria</taxon>
        <taxon>Enterobacterales</taxon>
        <taxon>Enterobacteriaceae</taxon>
        <taxon>Escherichia</taxon>
    </lineage>
</organism>
<accession>B1X9R0</accession>
<reference key="1">
    <citation type="journal article" date="2008" name="J. Bacteriol.">
        <title>The complete genome sequence of Escherichia coli DH10B: insights into the biology of a laboratory workhorse.</title>
        <authorList>
            <person name="Durfee T."/>
            <person name="Nelson R."/>
            <person name="Baldwin S."/>
            <person name="Plunkett G. III"/>
            <person name="Burland V."/>
            <person name="Mau B."/>
            <person name="Petrosino J.F."/>
            <person name="Qin X."/>
            <person name="Muzny D.M."/>
            <person name="Ayele M."/>
            <person name="Gibbs R.A."/>
            <person name="Csorgo B."/>
            <person name="Posfai G."/>
            <person name="Weinstock G.M."/>
            <person name="Blattner F.R."/>
        </authorList>
    </citation>
    <scope>NUCLEOTIDE SEQUENCE [LARGE SCALE GENOMIC DNA]</scope>
    <source>
        <strain>K12 / DH10B</strain>
    </source>
</reference>
<sequence length="321" mass="34723">MTKYALVGDVGGTNARLALCDIASGEISQAKTYSGLDYPSLEAVIRVYLEEHKVEVKDGCIAIACPITGDWVAMTNHTWAFSIAEMKKNLGFSHLEIINDFTAVSMAIPMLKKEHLIQFGGAEPVEGKPIAVYGAGTGLGVAHLVHVDKRWVSLPGEGGHVDFAPNSEEEAIILEILRAEIGHVSAERVLSGPGLVNLYRAIVKADNRLPENLKPKDITERALADSCTDCRRALSLFCVIMGRFGGNLALNLGTFGGVFIAGGIVPRFLEFFKASGFRAAFEDKGRFKEYVHDIPVYLIVHDNPGLLGSGAHLRQTLGHIL</sequence>